<dbReference type="EMBL" id="AM039952">
    <property type="protein sequence ID" value="CAJ24926.1"/>
    <property type="molecule type" value="Genomic_DNA"/>
</dbReference>
<dbReference type="RefSeq" id="WP_011348213.1">
    <property type="nucleotide sequence ID" value="NZ_CP017190.1"/>
</dbReference>
<dbReference type="SMR" id="Q3BQN7"/>
<dbReference type="STRING" id="456327.BJD11_06830"/>
<dbReference type="KEGG" id="xcv:XCV3195"/>
<dbReference type="eggNOG" id="COG0509">
    <property type="taxonomic scope" value="Bacteria"/>
</dbReference>
<dbReference type="HOGENOM" id="CLU_097408_2_2_6"/>
<dbReference type="Proteomes" id="UP000007069">
    <property type="component" value="Chromosome"/>
</dbReference>
<dbReference type="GO" id="GO:0005829">
    <property type="term" value="C:cytosol"/>
    <property type="evidence" value="ECO:0007669"/>
    <property type="project" value="TreeGrafter"/>
</dbReference>
<dbReference type="GO" id="GO:0005960">
    <property type="term" value="C:glycine cleavage complex"/>
    <property type="evidence" value="ECO:0007669"/>
    <property type="project" value="InterPro"/>
</dbReference>
<dbReference type="GO" id="GO:0019464">
    <property type="term" value="P:glycine decarboxylation via glycine cleavage system"/>
    <property type="evidence" value="ECO:0007669"/>
    <property type="project" value="UniProtKB-UniRule"/>
</dbReference>
<dbReference type="CDD" id="cd06848">
    <property type="entry name" value="GCS_H"/>
    <property type="match status" value="1"/>
</dbReference>
<dbReference type="Gene3D" id="2.40.50.100">
    <property type="match status" value="1"/>
</dbReference>
<dbReference type="HAMAP" id="MF_00272">
    <property type="entry name" value="GcvH"/>
    <property type="match status" value="1"/>
</dbReference>
<dbReference type="InterPro" id="IPR003016">
    <property type="entry name" value="2-oxoA_DH_lipoyl-BS"/>
</dbReference>
<dbReference type="InterPro" id="IPR000089">
    <property type="entry name" value="Biotin_lipoyl"/>
</dbReference>
<dbReference type="InterPro" id="IPR002930">
    <property type="entry name" value="GCV_H"/>
</dbReference>
<dbReference type="InterPro" id="IPR033753">
    <property type="entry name" value="GCV_H/Fam206"/>
</dbReference>
<dbReference type="InterPro" id="IPR017453">
    <property type="entry name" value="GCV_H_sub"/>
</dbReference>
<dbReference type="InterPro" id="IPR011053">
    <property type="entry name" value="Single_hybrid_motif"/>
</dbReference>
<dbReference type="NCBIfam" id="TIGR00527">
    <property type="entry name" value="gcvH"/>
    <property type="match status" value="1"/>
</dbReference>
<dbReference type="NCBIfam" id="NF002270">
    <property type="entry name" value="PRK01202.1"/>
    <property type="match status" value="1"/>
</dbReference>
<dbReference type="PANTHER" id="PTHR11715">
    <property type="entry name" value="GLYCINE CLEAVAGE SYSTEM H PROTEIN"/>
    <property type="match status" value="1"/>
</dbReference>
<dbReference type="PANTHER" id="PTHR11715:SF3">
    <property type="entry name" value="GLYCINE CLEAVAGE SYSTEM H PROTEIN-RELATED"/>
    <property type="match status" value="1"/>
</dbReference>
<dbReference type="Pfam" id="PF01597">
    <property type="entry name" value="GCV_H"/>
    <property type="match status" value="1"/>
</dbReference>
<dbReference type="SUPFAM" id="SSF51230">
    <property type="entry name" value="Single hybrid motif"/>
    <property type="match status" value="1"/>
</dbReference>
<dbReference type="PROSITE" id="PS50968">
    <property type="entry name" value="BIOTINYL_LIPOYL"/>
    <property type="match status" value="1"/>
</dbReference>
<dbReference type="PROSITE" id="PS00189">
    <property type="entry name" value="LIPOYL"/>
    <property type="match status" value="1"/>
</dbReference>
<organism>
    <name type="scientific">Xanthomonas euvesicatoria pv. vesicatoria (strain 85-10)</name>
    <name type="common">Xanthomonas campestris pv. vesicatoria</name>
    <dbReference type="NCBI Taxonomy" id="316273"/>
    <lineage>
        <taxon>Bacteria</taxon>
        <taxon>Pseudomonadati</taxon>
        <taxon>Pseudomonadota</taxon>
        <taxon>Gammaproteobacteria</taxon>
        <taxon>Lysobacterales</taxon>
        <taxon>Lysobacteraceae</taxon>
        <taxon>Xanthomonas</taxon>
    </lineage>
</organism>
<feature type="chain" id="PRO_0000302463" description="Glycine cleavage system H protein">
    <location>
        <begin position="1"/>
        <end position="131"/>
    </location>
</feature>
<feature type="domain" description="Lipoyl-binding" evidence="2">
    <location>
        <begin position="24"/>
        <end position="106"/>
    </location>
</feature>
<feature type="modified residue" description="N6-lipoyllysine" evidence="1">
    <location>
        <position position="65"/>
    </location>
</feature>
<evidence type="ECO:0000255" key="1">
    <source>
        <dbReference type="HAMAP-Rule" id="MF_00272"/>
    </source>
</evidence>
<evidence type="ECO:0000255" key="2">
    <source>
        <dbReference type="PROSITE-ProRule" id="PRU01066"/>
    </source>
</evidence>
<accession>Q3BQN7</accession>
<comment type="function">
    <text evidence="1">The glycine cleavage system catalyzes the degradation of glycine. The H protein shuttles the methylamine group of glycine from the P protein to the T protein.</text>
</comment>
<comment type="cofactor">
    <cofactor evidence="1">
        <name>(R)-lipoate</name>
        <dbReference type="ChEBI" id="CHEBI:83088"/>
    </cofactor>
    <text evidence="1">Binds 1 lipoyl cofactor covalently.</text>
</comment>
<comment type="subunit">
    <text evidence="1">The glycine cleavage system is composed of four proteins: P, T, L and H.</text>
</comment>
<comment type="similarity">
    <text evidence="1">Belongs to the GcvH family.</text>
</comment>
<keyword id="KW-0450">Lipoyl</keyword>
<protein>
    <recommendedName>
        <fullName evidence="1">Glycine cleavage system H protein</fullName>
    </recommendedName>
</protein>
<proteinExistence type="inferred from homology"/>
<name>GCSH_XANE5</name>
<gene>
    <name evidence="1" type="primary">gcvH</name>
    <name type="ordered locus">XCV3195</name>
</gene>
<sequence>MSEIPGDLKFLKSHEWARVESDGRVTVGISDHAQGLLGDLVYVELPGVGDTVQVGNGAAVVESVKAASDVYSPVSGTVVEVNSALSDKPETINEDAYGEGWIFVVEIDDKEQLNDLLDPDDYAELLEDDDH</sequence>
<reference key="1">
    <citation type="journal article" date="2005" name="J. Bacteriol.">
        <title>Insights into genome plasticity and pathogenicity of the plant pathogenic Bacterium Xanthomonas campestris pv. vesicatoria revealed by the complete genome sequence.</title>
        <authorList>
            <person name="Thieme F."/>
            <person name="Koebnik R."/>
            <person name="Bekel T."/>
            <person name="Berger C."/>
            <person name="Boch J."/>
            <person name="Buettner D."/>
            <person name="Caldana C."/>
            <person name="Gaigalat L."/>
            <person name="Goesmann A."/>
            <person name="Kay S."/>
            <person name="Kirchner O."/>
            <person name="Lanz C."/>
            <person name="Linke B."/>
            <person name="McHardy A.C."/>
            <person name="Meyer F."/>
            <person name="Mittenhuber G."/>
            <person name="Nies D.H."/>
            <person name="Niesbach-Kloesgen U."/>
            <person name="Patschkowski T."/>
            <person name="Rueckert C."/>
            <person name="Rupp O."/>
            <person name="Schneiker S."/>
            <person name="Schuster S.C."/>
            <person name="Vorhoelter F.J."/>
            <person name="Weber E."/>
            <person name="Puehler A."/>
            <person name="Bonas U."/>
            <person name="Bartels D."/>
            <person name="Kaiser O."/>
        </authorList>
    </citation>
    <scope>NUCLEOTIDE SEQUENCE [LARGE SCALE GENOMIC DNA]</scope>
    <source>
        <strain>85-10</strain>
    </source>
</reference>